<organism>
    <name type="scientific">Radianthus crispa</name>
    <name type="common">Leathery sea anemone</name>
    <name type="synonym">Heteractis crispa</name>
    <dbReference type="NCBI Taxonomy" id="3122430"/>
    <lineage>
        <taxon>Eukaryota</taxon>
        <taxon>Metazoa</taxon>
        <taxon>Cnidaria</taxon>
        <taxon>Anthozoa</taxon>
        <taxon>Hexacorallia</taxon>
        <taxon>Actiniaria</taxon>
        <taxon>Stichodactylidae</taxon>
        <taxon>Radianthus</taxon>
    </lineage>
</organism>
<dbReference type="PIR" id="JN0355">
    <property type="entry name" value="JN0355"/>
</dbReference>
<dbReference type="SMR" id="P30831"/>
<dbReference type="GO" id="GO:0005576">
    <property type="term" value="C:extracellular region"/>
    <property type="evidence" value="ECO:0007669"/>
    <property type="project" value="UniProtKB-SubCell"/>
</dbReference>
<dbReference type="GO" id="GO:0042151">
    <property type="term" value="C:nematocyst"/>
    <property type="evidence" value="ECO:0007669"/>
    <property type="project" value="UniProtKB-SubCell"/>
</dbReference>
<dbReference type="GO" id="GO:0017080">
    <property type="term" value="F:sodium channel regulator activity"/>
    <property type="evidence" value="ECO:0007669"/>
    <property type="project" value="UniProtKB-KW"/>
</dbReference>
<dbReference type="GO" id="GO:0090729">
    <property type="term" value="F:toxin activity"/>
    <property type="evidence" value="ECO:0007669"/>
    <property type="project" value="UniProtKB-KW"/>
</dbReference>
<dbReference type="GO" id="GO:0009966">
    <property type="term" value="P:regulation of signal transduction"/>
    <property type="evidence" value="ECO:0007669"/>
    <property type="project" value="InterPro"/>
</dbReference>
<dbReference type="Gene3D" id="2.20.20.10">
    <property type="entry name" value="Anthopleurin-A"/>
    <property type="match status" value="1"/>
</dbReference>
<dbReference type="InterPro" id="IPR000693">
    <property type="entry name" value="Anenome_toxin"/>
</dbReference>
<dbReference type="InterPro" id="IPR023355">
    <property type="entry name" value="Myo_ane_neurotoxin_sf"/>
</dbReference>
<dbReference type="Pfam" id="PF00706">
    <property type="entry name" value="Toxin_4"/>
    <property type="match status" value="1"/>
</dbReference>
<dbReference type="PIRSF" id="PIRSF001905">
    <property type="entry name" value="Anenome_toxin"/>
    <property type="match status" value="1"/>
</dbReference>
<dbReference type="SUPFAM" id="SSF57392">
    <property type="entry name" value="Defensin-like"/>
    <property type="match status" value="1"/>
</dbReference>
<keyword id="KW-0903">Direct protein sequencing</keyword>
<keyword id="KW-1015">Disulfide bond</keyword>
<keyword id="KW-0872">Ion channel impairing toxin</keyword>
<keyword id="KW-0166">Nematocyst</keyword>
<keyword id="KW-0528">Neurotoxin</keyword>
<keyword id="KW-0964">Secreted</keyword>
<keyword id="KW-0800">Toxin</keyword>
<keyword id="KW-0738">Voltage-gated sodium channel impairing toxin</keyword>
<evidence type="ECO:0000250" key="1">
    <source>
        <dbReference type="UniProtKB" id="P19651"/>
    </source>
</evidence>
<evidence type="ECO:0000250" key="2">
    <source>
        <dbReference type="UniProtKB" id="P30832"/>
    </source>
</evidence>
<evidence type="ECO:0000269" key="3">
    <source>
    </source>
</evidence>
<evidence type="ECO:0000303" key="4">
    <source>
    </source>
</evidence>
<evidence type="ECO:0000303" key="5">
    <source>
    </source>
</evidence>
<evidence type="ECO:0000305" key="6"/>
<reference key="1">
    <citation type="journal article" date="1989" name="Bioorg. Khim.">
        <title>Amino acid sequence of a neurotoxin from the anemone Radianthus macrodactylus.</title>
        <authorList>
            <person name="Zykova T.A."/>
            <person name="Kozlovskaya E.P."/>
        </authorList>
    </citation>
    <scope>PROTEIN SEQUENCE</scope>
    <scope>SUBCELLULAR LOCATION</scope>
    <source>
        <tissue>Nematoblast</tissue>
    </source>
</reference>
<reference key="2">
    <citation type="journal article" date="2012" name="Toxicon">
        <title>Development of a rational nomenclature for naming peptide and protein toxins from sea anemones.</title>
        <authorList>
            <person name="Oliveira J.S."/>
            <person name="Fuentes-Silva D."/>
            <person name="King G.F."/>
        </authorList>
    </citation>
    <scope>NOMENCLATURE</scope>
</reference>
<proteinExistence type="evidence at protein level"/>
<name>NA21_RADCR</name>
<sequence length="48" mass="5183">ASCKCDDDGPDVRSATFTGTVDFAYCNAGWEKCLAVYTPVASCCRKKK</sequence>
<protein>
    <recommendedName>
        <fullName evidence="4">Delta-stichotoxin-Hcr1e</fullName>
        <shortName evidence="4">Delta-SHTX-Hcr1e</shortName>
    </recommendedName>
    <alternativeName>
        <fullName evidence="5">Neurotoxin I</fullName>
    </alternativeName>
    <alternativeName>
        <fullName>RTX-I</fullName>
    </alternativeName>
    <alternativeName>
        <fullName>Rm1</fullName>
    </alternativeName>
</protein>
<accession>P30831</accession>
<feature type="chain" id="PRO_0000221522" description="Delta-stichotoxin-Hcr1e" evidence="3">
    <location>
        <begin position="1"/>
        <end position="48"/>
    </location>
</feature>
<feature type="disulfide bond" evidence="1">
    <location>
        <begin position="3"/>
        <end position="43"/>
    </location>
</feature>
<feature type="disulfide bond" evidence="1">
    <location>
        <begin position="5"/>
        <end position="33"/>
    </location>
</feature>
<feature type="disulfide bond" evidence="1">
    <location>
        <begin position="26"/>
        <end position="44"/>
    </location>
</feature>
<comment type="function">
    <text evidence="2">Binds to site 3 of voltage-gated sodium channels and inhibits the inactivation process.</text>
</comment>
<comment type="subcellular location">
    <subcellularLocation>
        <location evidence="3">Secreted</location>
    </subcellularLocation>
    <subcellularLocation>
        <location>Nematocyst</location>
    </subcellularLocation>
</comment>
<comment type="miscellaneous">
    <text evidence="6">A synonymy between H.magnifica and R.crispa is controversial.</text>
</comment>
<comment type="similarity">
    <text evidence="6">Belongs to the sea anemone sodium channel inhibitory toxin family. Type II subfamily.</text>
</comment>